<name>Y2039_PROMH</name>
<reference key="1">
    <citation type="journal article" date="2008" name="J. Bacteriol.">
        <title>Complete genome sequence of uropathogenic Proteus mirabilis, a master of both adherence and motility.</title>
        <authorList>
            <person name="Pearson M.M."/>
            <person name="Sebaihia M."/>
            <person name="Churcher C."/>
            <person name="Quail M.A."/>
            <person name="Seshasayee A.S."/>
            <person name="Luscombe N.M."/>
            <person name="Abdellah Z."/>
            <person name="Arrosmith C."/>
            <person name="Atkin B."/>
            <person name="Chillingworth T."/>
            <person name="Hauser H."/>
            <person name="Jagels K."/>
            <person name="Moule S."/>
            <person name="Mungall K."/>
            <person name="Norbertczak H."/>
            <person name="Rabbinowitsch E."/>
            <person name="Walker D."/>
            <person name="Whithead S."/>
            <person name="Thomson N.R."/>
            <person name="Rather P.N."/>
            <person name="Parkhill J."/>
            <person name="Mobley H.L.T."/>
        </authorList>
    </citation>
    <scope>NUCLEOTIDE SEQUENCE [LARGE SCALE GENOMIC DNA]</scope>
    <source>
        <strain>HI4320</strain>
    </source>
</reference>
<gene>
    <name type="ordered locus">PMI2039</name>
</gene>
<dbReference type="EMBL" id="AM942759">
    <property type="protein sequence ID" value="CAR44092.1"/>
    <property type="molecule type" value="Genomic_DNA"/>
</dbReference>
<dbReference type="RefSeq" id="WP_004244066.1">
    <property type="nucleotide sequence ID" value="NC_010554.1"/>
</dbReference>
<dbReference type="SMR" id="B4F0Y2"/>
<dbReference type="EnsemblBacteria" id="CAR44092">
    <property type="protein sequence ID" value="CAR44092"/>
    <property type="gene ID" value="PMI2039"/>
</dbReference>
<dbReference type="GeneID" id="6800315"/>
<dbReference type="KEGG" id="pmr:PMI2039"/>
<dbReference type="eggNOG" id="COG3112">
    <property type="taxonomic scope" value="Bacteria"/>
</dbReference>
<dbReference type="HOGENOM" id="CLU_139226_0_0_6"/>
<dbReference type="Proteomes" id="UP000008319">
    <property type="component" value="Chromosome"/>
</dbReference>
<dbReference type="HAMAP" id="MF_01053">
    <property type="entry name" value="UPF0231"/>
    <property type="match status" value="1"/>
</dbReference>
<dbReference type="InterPro" id="IPR008249">
    <property type="entry name" value="UPF0231"/>
</dbReference>
<dbReference type="NCBIfam" id="NF003576">
    <property type="entry name" value="PRK05248.1-3"/>
    <property type="match status" value="1"/>
</dbReference>
<dbReference type="Pfam" id="PF06062">
    <property type="entry name" value="UPF0231"/>
    <property type="match status" value="1"/>
</dbReference>
<dbReference type="PIRSF" id="PIRSF006287">
    <property type="entry name" value="UCP006287"/>
    <property type="match status" value="1"/>
</dbReference>
<evidence type="ECO:0000255" key="1">
    <source>
        <dbReference type="HAMAP-Rule" id="MF_01053"/>
    </source>
</evidence>
<organism>
    <name type="scientific">Proteus mirabilis (strain HI4320)</name>
    <dbReference type="NCBI Taxonomy" id="529507"/>
    <lineage>
        <taxon>Bacteria</taxon>
        <taxon>Pseudomonadati</taxon>
        <taxon>Pseudomonadota</taxon>
        <taxon>Gammaproteobacteria</taxon>
        <taxon>Enterobacterales</taxon>
        <taxon>Morganellaceae</taxon>
        <taxon>Proteus</taxon>
    </lineage>
</organism>
<accession>B4F0Y2</accession>
<proteinExistence type="inferred from homology"/>
<sequence length="123" mass="14439">MDYEFQRDLTGGILARFSMDHEAIGYWLNDEIQGDISLIDQILTEMDEVKGSEKQWQLIGKEYSLSIDDEEIMVRANTLHFETDDLEEGMSYYDNESIAFCGLDDFATMLQKYRLFILENRRS</sequence>
<protein>
    <recommendedName>
        <fullName evidence="1">UPF0231 protein PMI2039</fullName>
    </recommendedName>
</protein>
<feature type="chain" id="PRO_1000136300" description="UPF0231 protein PMI2039">
    <location>
        <begin position="1"/>
        <end position="123"/>
    </location>
</feature>
<comment type="similarity">
    <text evidence="1">Belongs to the UPF0231 family.</text>
</comment>
<keyword id="KW-1185">Reference proteome</keyword>